<organism>
    <name type="scientific">Pasteurella multocida (strain Pm70)</name>
    <dbReference type="NCBI Taxonomy" id="272843"/>
    <lineage>
        <taxon>Bacteria</taxon>
        <taxon>Pseudomonadati</taxon>
        <taxon>Pseudomonadota</taxon>
        <taxon>Gammaproteobacteria</taxon>
        <taxon>Pasteurellales</taxon>
        <taxon>Pasteurellaceae</taxon>
        <taxon>Pasteurella</taxon>
    </lineage>
</organism>
<reference key="1">
    <citation type="journal article" date="2001" name="Proc. Natl. Acad. Sci. U.S.A.">
        <title>Complete genomic sequence of Pasteurella multocida Pm70.</title>
        <authorList>
            <person name="May B.J."/>
            <person name="Zhang Q."/>
            <person name="Li L.L."/>
            <person name="Paustian M.L."/>
            <person name="Whittam T.S."/>
            <person name="Kapur V."/>
        </authorList>
    </citation>
    <scope>NUCLEOTIDE SEQUENCE [LARGE SCALE GENOMIC DNA]</scope>
    <source>
        <strain>Pm70</strain>
    </source>
</reference>
<comment type="catalytic activity">
    <reaction evidence="1">
        <text>thymidine + ATP = dTMP + ADP + H(+)</text>
        <dbReference type="Rhea" id="RHEA:19129"/>
        <dbReference type="ChEBI" id="CHEBI:15378"/>
        <dbReference type="ChEBI" id="CHEBI:17748"/>
        <dbReference type="ChEBI" id="CHEBI:30616"/>
        <dbReference type="ChEBI" id="CHEBI:63528"/>
        <dbReference type="ChEBI" id="CHEBI:456216"/>
        <dbReference type="EC" id="2.7.1.21"/>
    </reaction>
</comment>
<comment type="subunit">
    <text evidence="1">Homotetramer.</text>
</comment>
<comment type="subcellular location">
    <subcellularLocation>
        <location evidence="1">Cytoplasm</location>
    </subcellularLocation>
</comment>
<comment type="similarity">
    <text evidence="1">Belongs to the thymidine kinase family.</text>
</comment>
<proteinExistence type="inferred from homology"/>
<name>KITH_PASMU</name>
<sequence>MAKLYFYYSTMNAGKSTTLLQSSYNYQERDMNTLVYTAAIDDRFGVGKVTSRIGISQEAQLFHKESDLFVEIAQHLQQQPLHCILVDEAQFLTKTQVYQLSEVVDKLKIPVLCYGLRTDFQAELFEGSKYLLAWADQLEELKTICYCGRKANFVLRLNDKGEVVRDGAQIQIGGNDSYLSVCRLHYKEKIAL</sequence>
<feature type="chain" id="PRO_0000175002" description="Thymidine kinase">
    <location>
        <begin position="1"/>
        <end position="192"/>
    </location>
</feature>
<feature type="active site" description="Proton acceptor" evidence="1">
    <location>
        <position position="88"/>
    </location>
</feature>
<feature type="binding site" evidence="1">
    <location>
        <begin position="9"/>
        <end position="16"/>
    </location>
    <ligand>
        <name>ATP</name>
        <dbReference type="ChEBI" id="CHEBI:30616"/>
    </ligand>
</feature>
<feature type="binding site" evidence="1">
    <location>
        <begin position="87"/>
        <end position="90"/>
    </location>
    <ligand>
        <name>ATP</name>
        <dbReference type="ChEBI" id="CHEBI:30616"/>
    </ligand>
</feature>
<feature type="binding site" evidence="1">
    <location>
        <position position="145"/>
    </location>
    <ligand>
        <name>Zn(2+)</name>
        <dbReference type="ChEBI" id="CHEBI:29105"/>
    </ligand>
</feature>
<feature type="binding site" evidence="1">
    <location>
        <position position="147"/>
    </location>
    <ligand>
        <name>Zn(2+)</name>
        <dbReference type="ChEBI" id="CHEBI:29105"/>
    </ligand>
</feature>
<feature type="binding site" evidence="1">
    <location>
        <position position="182"/>
    </location>
    <ligand>
        <name>Zn(2+)</name>
        <dbReference type="ChEBI" id="CHEBI:29105"/>
    </ligand>
</feature>
<feature type="binding site" evidence="1">
    <location>
        <position position="185"/>
    </location>
    <ligand>
        <name>Zn(2+)</name>
        <dbReference type="ChEBI" id="CHEBI:29105"/>
    </ligand>
</feature>
<dbReference type="EC" id="2.7.1.21" evidence="1"/>
<dbReference type="EMBL" id="AE004439">
    <property type="protein sequence ID" value="AAK03320.1"/>
    <property type="molecule type" value="Genomic_DNA"/>
</dbReference>
<dbReference type="RefSeq" id="WP_005717659.1">
    <property type="nucleotide sequence ID" value="NC_002663.1"/>
</dbReference>
<dbReference type="SMR" id="P57926"/>
<dbReference type="STRING" id="272843.PM1236"/>
<dbReference type="EnsemblBacteria" id="AAK03320">
    <property type="protein sequence ID" value="AAK03320"/>
    <property type="gene ID" value="PM1236"/>
</dbReference>
<dbReference type="KEGG" id="pmu:PM1236"/>
<dbReference type="HOGENOM" id="CLU_064400_2_1_6"/>
<dbReference type="OrthoDB" id="9781579at2"/>
<dbReference type="Proteomes" id="UP000000809">
    <property type="component" value="Chromosome"/>
</dbReference>
<dbReference type="GO" id="GO:0005829">
    <property type="term" value="C:cytosol"/>
    <property type="evidence" value="ECO:0007669"/>
    <property type="project" value="TreeGrafter"/>
</dbReference>
<dbReference type="GO" id="GO:0005524">
    <property type="term" value="F:ATP binding"/>
    <property type="evidence" value="ECO:0007669"/>
    <property type="project" value="UniProtKB-UniRule"/>
</dbReference>
<dbReference type="GO" id="GO:0004797">
    <property type="term" value="F:thymidine kinase activity"/>
    <property type="evidence" value="ECO:0007669"/>
    <property type="project" value="UniProtKB-UniRule"/>
</dbReference>
<dbReference type="GO" id="GO:0008270">
    <property type="term" value="F:zinc ion binding"/>
    <property type="evidence" value="ECO:0007669"/>
    <property type="project" value="UniProtKB-UniRule"/>
</dbReference>
<dbReference type="GO" id="GO:0071897">
    <property type="term" value="P:DNA biosynthetic process"/>
    <property type="evidence" value="ECO:0007669"/>
    <property type="project" value="UniProtKB-KW"/>
</dbReference>
<dbReference type="GO" id="GO:0046104">
    <property type="term" value="P:thymidine metabolic process"/>
    <property type="evidence" value="ECO:0007669"/>
    <property type="project" value="TreeGrafter"/>
</dbReference>
<dbReference type="FunFam" id="3.40.50.300:FF:000323">
    <property type="entry name" value="Thymidine kinase"/>
    <property type="match status" value="1"/>
</dbReference>
<dbReference type="Gene3D" id="3.30.60.20">
    <property type="match status" value="1"/>
</dbReference>
<dbReference type="Gene3D" id="3.40.50.300">
    <property type="entry name" value="P-loop containing nucleotide triphosphate hydrolases"/>
    <property type="match status" value="1"/>
</dbReference>
<dbReference type="HAMAP" id="MF_00124">
    <property type="entry name" value="Thymidine_kinase"/>
    <property type="match status" value="1"/>
</dbReference>
<dbReference type="InterPro" id="IPR027417">
    <property type="entry name" value="P-loop_NTPase"/>
</dbReference>
<dbReference type="InterPro" id="IPR001267">
    <property type="entry name" value="Thymidine_kinase"/>
</dbReference>
<dbReference type="InterPro" id="IPR020633">
    <property type="entry name" value="Thymidine_kinase_CS"/>
</dbReference>
<dbReference type="NCBIfam" id="NF003300">
    <property type="entry name" value="PRK04296.1-5"/>
    <property type="match status" value="1"/>
</dbReference>
<dbReference type="PANTHER" id="PTHR11441">
    <property type="entry name" value="THYMIDINE KINASE"/>
    <property type="match status" value="1"/>
</dbReference>
<dbReference type="PANTHER" id="PTHR11441:SF0">
    <property type="entry name" value="THYMIDINE KINASE, CYTOSOLIC"/>
    <property type="match status" value="1"/>
</dbReference>
<dbReference type="Pfam" id="PF00265">
    <property type="entry name" value="TK"/>
    <property type="match status" value="1"/>
</dbReference>
<dbReference type="PIRSF" id="PIRSF035805">
    <property type="entry name" value="TK_cell"/>
    <property type="match status" value="1"/>
</dbReference>
<dbReference type="SUPFAM" id="SSF57716">
    <property type="entry name" value="Glucocorticoid receptor-like (DNA-binding domain)"/>
    <property type="match status" value="1"/>
</dbReference>
<dbReference type="SUPFAM" id="SSF52540">
    <property type="entry name" value="P-loop containing nucleoside triphosphate hydrolases"/>
    <property type="match status" value="1"/>
</dbReference>
<dbReference type="PROSITE" id="PS00603">
    <property type="entry name" value="TK_CELLULAR_TYPE"/>
    <property type="match status" value="1"/>
</dbReference>
<accession>P57926</accession>
<gene>
    <name evidence="1" type="primary">tdk</name>
    <name type="ordered locus">PM1236</name>
</gene>
<evidence type="ECO:0000255" key="1">
    <source>
        <dbReference type="HAMAP-Rule" id="MF_00124"/>
    </source>
</evidence>
<keyword id="KW-0067">ATP-binding</keyword>
<keyword id="KW-0963">Cytoplasm</keyword>
<keyword id="KW-0237">DNA synthesis</keyword>
<keyword id="KW-0418">Kinase</keyword>
<keyword id="KW-0479">Metal-binding</keyword>
<keyword id="KW-0547">Nucleotide-binding</keyword>
<keyword id="KW-1185">Reference proteome</keyword>
<keyword id="KW-0808">Transferase</keyword>
<keyword id="KW-0862">Zinc</keyword>
<protein>
    <recommendedName>
        <fullName evidence="1">Thymidine kinase</fullName>
        <ecNumber evidence="1">2.7.1.21</ecNumber>
    </recommendedName>
</protein>